<proteinExistence type="inferred from homology"/>
<reference key="1">
    <citation type="journal article" date="2002" name="Science">
        <title>The genome sequence of the malaria mosquito Anopheles gambiae.</title>
        <authorList>
            <person name="Holt R.A."/>
            <person name="Subramanian G.M."/>
            <person name="Halpern A."/>
            <person name="Sutton G.G."/>
            <person name="Charlab R."/>
            <person name="Nusskern D.R."/>
            <person name="Wincker P."/>
            <person name="Clark A.G."/>
            <person name="Ribeiro J.M.C."/>
            <person name="Wides R."/>
            <person name="Salzberg S.L."/>
            <person name="Loftus B.J."/>
            <person name="Yandell M.D."/>
            <person name="Majoros W.H."/>
            <person name="Rusch D.B."/>
            <person name="Lai Z."/>
            <person name="Kraft C.L."/>
            <person name="Abril J.F."/>
            <person name="Anthouard V."/>
            <person name="Arensburger P."/>
            <person name="Atkinson P.W."/>
            <person name="Baden H."/>
            <person name="de Berardinis V."/>
            <person name="Baldwin D."/>
            <person name="Benes V."/>
            <person name="Biedler J."/>
            <person name="Blass C."/>
            <person name="Bolanos R."/>
            <person name="Boscus D."/>
            <person name="Barnstead M."/>
            <person name="Cai S."/>
            <person name="Center A."/>
            <person name="Chaturverdi K."/>
            <person name="Christophides G.K."/>
            <person name="Chrystal M.A.M."/>
            <person name="Clamp M."/>
            <person name="Cravchik A."/>
            <person name="Curwen V."/>
            <person name="Dana A."/>
            <person name="Delcher A."/>
            <person name="Dew I."/>
            <person name="Evans C.A."/>
            <person name="Flanigan M."/>
            <person name="Grundschober-Freimoser A."/>
            <person name="Friedli L."/>
            <person name="Gu Z."/>
            <person name="Guan P."/>
            <person name="Guigo R."/>
            <person name="Hillenmeyer M.E."/>
            <person name="Hladun S.L."/>
            <person name="Hogan J.R."/>
            <person name="Hong Y.S."/>
            <person name="Hoover J."/>
            <person name="Jaillon O."/>
            <person name="Ke Z."/>
            <person name="Kodira C.D."/>
            <person name="Kokoza E."/>
            <person name="Koutsos A."/>
            <person name="Letunic I."/>
            <person name="Levitsky A.A."/>
            <person name="Liang Y."/>
            <person name="Lin J.-J."/>
            <person name="Lobo N.F."/>
            <person name="Lopez J.R."/>
            <person name="Malek J.A."/>
            <person name="McIntosh T.C."/>
            <person name="Meister S."/>
            <person name="Miller J.R."/>
            <person name="Mobarry C."/>
            <person name="Mongin E."/>
            <person name="Murphy S.D."/>
            <person name="O'Brochta D.A."/>
            <person name="Pfannkoch C."/>
            <person name="Qi R."/>
            <person name="Regier M.A."/>
            <person name="Remington K."/>
            <person name="Shao H."/>
            <person name="Sharakhova M.V."/>
            <person name="Sitter C.D."/>
            <person name="Shetty J."/>
            <person name="Smith T.J."/>
            <person name="Strong R."/>
            <person name="Sun J."/>
            <person name="Thomasova D."/>
            <person name="Ton L.Q."/>
            <person name="Topalis P."/>
            <person name="Tu Z.J."/>
            <person name="Unger M.F."/>
            <person name="Walenz B."/>
            <person name="Wang A.H."/>
            <person name="Wang J."/>
            <person name="Wang M."/>
            <person name="Wang X."/>
            <person name="Woodford K.J."/>
            <person name="Wortman J.R."/>
            <person name="Wu M."/>
            <person name="Yao A."/>
            <person name="Zdobnov E.M."/>
            <person name="Zhang H."/>
            <person name="Zhao Q."/>
            <person name="Zhao S."/>
            <person name="Zhu S.C."/>
            <person name="Zhimulev I."/>
            <person name="Coluzzi M."/>
            <person name="della Torre A."/>
            <person name="Roth C.W."/>
            <person name="Louis C."/>
            <person name="Kalush F."/>
            <person name="Mural R.J."/>
            <person name="Myers E.W."/>
            <person name="Adams M.D."/>
            <person name="Smith H.O."/>
            <person name="Broder S."/>
            <person name="Gardner M.J."/>
            <person name="Fraser C.M."/>
            <person name="Birney E."/>
            <person name="Bork P."/>
            <person name="Brey P.T."/>
            <person name="Venter J.C."/>
            <person name="Weissenbach J."/>
            <person name="Kafatos F.C."/>
            <person name="Collins F.H."/>
            <person name="Hoffman S.L."/>
        </authorList>
    </citation>
    <scope>NUCLEOTIDE SEQUENCE [LARGE SCALE GENOMIC DNA]</scope>
    <source>
        <strain>PEST</strain>
    </source>
</reference>
<protein>
    <recommendedName>
        <fullName>Mediator of RNA polymerase II transcription subunit 8</fullName>
    </recommendedName>
    <alternativeName>
        <fullName>Mediator complex subunit 8</fullName>
    </alternativeName>
</protein>
<keyword id="KW-0010">Activator</keyword>
<keyword id="KW-0175">Coiled coil</keyword>
<keyword id="KW-0539">Nucleus</keyword>
<keyword id="KW-1185">Reference proteome</keyword>
<keyword id="KW-0804">Transcription</keyword>
<keyword id="KW-0805">Transcription regulation</keyword>
<comment type="function">
    <text evidence="1">Component of the Mediator complex, a coactivator involved in the regulated transcription of nearly all RNA polymerase II-dependent genes. Mediator functions as a bridge to convey information from gene-specific regulatory proteins to the basal RNA polymerase II transcription machinery. Mediator is recruited to promoters by direct interactions with regulatory proteins and serves as a scaffold for the assembly of a functional preinitiation complex with RNA polymerase II and the general transcription factors (By similarity).</text>
</comment>
<comment type="subunit">
    <text evidence="1">Component of the Mediator complex.</text>
</comment>
<comment type="subcellular location">
    <subcellularLocation>
        <location evidence="4">Nucleus</location>
    </subcellularLocation>
</comment>
<comment type="similarity">
    <text evidence="4">Belongs to the Mediator complex subunit 8 family.</text>
</comment>
<feature type="chain" id="PRO_0000304530" description="Mediator of RNA polymerase II transcription subunit 8">
    <location>
        <begin position="1"/>
        <end position="249"/>
    </location>
</feature>
<feature type="region of interest" description="Disordered" evidence="3">
    <location>
        <begin position="215"/>
        <end position="249"/>
    </location>
</feature>
<feature type="coiled-coil region" evidence="2">
    <location>
        <begin position="1"/>
        <end position="26"/>
    </location>
</feature>
<feature type="compositionally biased region" description="Polar residues" evidence="3">
    <location>
        <begin position="215"/>
        <end position="224"/>
    </location>
</feature>
<feature type="compositionally biased region" description="Polar residues" evidence="3">
    <location>
        <begin position="235"/>
        <end position="249"/>
    </location>
</feature>
<sequence>MQREEKQLDMLLEAVLNRLNDLKHSIGVMIHRLETEYETINWPTFLDNFALISSHLTGLMKILSTEIGTPLRNLTVLPLMLTPERDEALLQLTEGRVPIFSHDLAPDYLRTKPDPGAESRQAAHEAKANNLTVEASMKQVAQYNKVISHVWDIISKAKEDWENESSTRPGIQQTSSMADTQALVAAVGLGNGLTAPVGPPTGAGVMIPPAIRQGSPMSAVSPSGNAPMGKMPSGIKTNIKSANQVHPYR</sequence>
<accession>Q7Q6D6</accession>
<organism>
    <name type="scientific">Anopheles gambiae</name>
    <name type="common">African malaria mosquito</name>
    <dbReference type="NCBI Taxonomy" id="7165"/>
    <lineage>
        <taxon>Eukaryota</taxon>
        <taxon>Metazoa</taxon>
        <taxon>Ecdysozoa</taxon>
        <taxon>Arthropoda</taxon>
        <taxon>Hexapoda</taxon>
        <taxon>Insecta</taxon>
        <taxon>Pterygota</taxon>
        <taxon>Neoptera</taxon>
        <taxon>Endopterygota</taxon>
        <taxon>Diptera</taxon>
        <taxon>Nematocera</taxon>
        <taxon>Culicoidea</taxon>
        <taxon>Culicidae</taxon>
        <taxon>Anophelinae</taxon>
        <taxon>Anopheles</taxon>
    </lineage>
</organism>
<gene>
    <name type="primary">MED8</name>
    <name type="ORF">AGAP005909</name>
</gene>
<name>MED8_ANOGA</name>
<dbReference type="EMBL" id="AAAB01008960">
    <property type="protein sequence ID" value="EAA11644.2"/>
    <property type="molecule type" value="Genomic_DNA"/>
</dbReference>
<dbReference type="SMR" id="Q7Q6D6"/>
<dbReference type="FunCoup" id="Q7Q6D6">
    <property type="interactions" value="1932"/>
</dbReference>
<dbReference type="STRING" id="7165.Q7Q6D6"/>
<dbReference type="PaxDb" id="7165-AGAP005909-PA"/>
<dbReference type="EnsemblMetazoa" id="AGAP005909-RA">
    <property type="protein sequence ID" value="AGAP005909-PA"/>
    <property type="gene ID" value="AGAP005909"/>
</dbReference>
<dbReference type="GeneID" id="1276576"/>
<dbReference type="KEGG" id="aga:1276576"/>
<dbReference type="CTD" id="112950"/>
<dbReference type="VEuPathDB" id="VectorBase:AGAMI1_001731"/>
<dbReference type="VEuPathDB" id="VectorBase:AGAP005909"/>
<dbReference type="eggNOG" id="KOG3583">
    <property type="taxonomic scope" value="Eukaryota"/>
</dbReference>
<dbReference type="HOGENOM" id="CLU_085476_0_0_1"/>
<dbReference type="InParanoid" id="Q7Q6D6"/>
<dbReference type="OMA" id="FKLEHEY"/>
<dbReference type="OrthoDB" id="150687at2759"/>
<dbReference type="PhylomeDB" id="Q7Q6D6"/>
<dbReference type="Proteomes" id="UP000007062">
    <property type="component" value="Chromosome 2L"/>
</dbReference>
<dbReference type="GO" id="GO:0070847">
    <property type="term" value="C:core mediator complex"/>
    <property type="evidence" value="ECO:0000318"/>
    <property type="project" value="GO_Central"/>
</dbReference>
<dbReference type="GO" id="GO:0016592">
    <property type="term" value="C:mediator complex"/>
    <property type="evidence" value="ECO:0000318"/>
    <property type="project" value="GO_Central"/>
</dbReference>
<dbReference type="GO" id="GO:0000978">
    <property type="term" value="F:RNA polymerase II cis-regulatory region sequence-specific DNA binding"/>
    <property type="evidence" value="ECO:0000318"/>
    <property type="project" value="GO_Central"/>
</dbReference>
<dbReference type="GO" id="GO:0003712">
    <property type="term" value="F:transcription coregulator activity"/>
    <property type="evidence" value="ECO:0000318"/>
    <property type="project" value="GO_Central"/>
</dbReference>
<dbReference type="GO" id="GO:0006357">
    <property type="term" value="P:regulation of transcription by RNA polymerase II"/>
    <property type="evidence" value="ECO:0000318"/>
    <property type="project" value="GO_Central"/>
</dbReference>
<dbReference type="FunFam" id="1.20.58.1710:FF:000001">
    <property type="entry name" value="Mediator of RNA polymerase II transcription subunit 8"/>
    <property type="match status" value="1"/>
</dbReference>
<dbReference type="Gene3D" id="1.20.58.1710">
    <property type="match status" value="1"/>
</dbReference>
<dbReference type="InterPro" id="IPR019364">
    <property type="entry name" value="Mediatior_Med8_fun/met"/>
</dbReference>
<dbReference type="PANTHER" id="PTHR13074">
    <property type="entry name" value="MEDIATOR OF RNA POLYMERASE II TRANSCRIPTION SUBUNIT 8"/>
    <property type="match status" value="1"/>
</dbReference>
<dbReference type="PANTHER" id="PTHR13074:SF9">
    <property type="entry name" value="MEDIATOR OF RNA POLYMERASE II TRANSCRIPTION SUBUNIT 8"/>
    <property type="match status" value="1"/>
</dbReference>
<dbReference type="Pfam" id="PF10232">
    <property type="entry name" value="Med8"/>
    <property type="match status" value="1"/>
</dbReference>
<evidence type="ECO:0000250" key="1"/>
<evidence type="ECO:0000255" key="2"/>
<evidence type="ECO:0000256" key="3">
    <source>
        <dbReference type="SAM" id="MobiDB-lite"/>
    </source>
</evidence>
<evidence type="ECO:0000305" key="4"/>